<sequence length="325" mass="35024">MIARIWSGESPLWRLLLPLSWLYGLVSGAIRLSYKLGFKRAWRAPVPVVVVGNLTAGGNGKTPVVIWLVEKLQQRGVRVGVVSRGYGGKAAAYPLLLTPETTTAEAGDEPVLIYQRTGAPVAVAPERAAAVKAILAAHNVQIIITDDGLQHYRLARDIEIVVIDGVRRFGNGWWLPAGPMRERASRLKTVDAAIVNGGVARVGEIPMQLAPGLAVNLRTGARCDVAQLSNIVAMAGIGHPPRFFATLEACGAHPQKCVPLADHQTLAPADVQALVGEGQTLVMTEKDAVKCRAFAEDNWWFLPVDARLSGEQPDKLLEHITSLVR</sequence>
<evidence type="ECO:0000255" key="1">
    <source>
        <dbReference type="HAMAP-Rule" id="MF_00409"/>
    </source>
</evidence>
<comment type="function">
    <text evidence="1">Transfers the gamma-phosphate of ATP to the 4'-position of a tetraacyldisaccharide 1-phosphate intermediate (termed DS-1-P) to form tetraacyldisaccharide 1,4'-bis-phosphate (lipid IVA).</text>
</comment>
<comment type="catalytic activity">
    <reaction evidence="1">
        <text>a lipid A disaccharide + ATP = a lipid IVA + ADP + H(+)</text>
        <dbReference type="Rhea" id="RHEA:67840"/>
        <dbReference type="ChEBI" id="CHEBI:15378"/>
        <dbReference type="ChEBI" id="CHEBI:30616"/>
        <dbReference type="ChEBI" id="CHEBI:176343"/>
        <dbReference type="ChEBI" id="CHEBI:176425"/>
        <dbReference type="ChEBI" id="CHEBI:456216"/>
        <dbReference type="EC" id="2.7.1.130"/>
    </reaction>
</comment>
<comment type="pathway">
    <text evidence="1">Glycolipid biosynthesis; lipid IV(A) biosynthesis; lipid IV(A) from (3R)-3-hydroxytetradecanoyl-[acyl-carrier-protein] and UDP-N-acetyl-alpha-D-glucosamine: step 6/6.</text>
</comment>
<comment type="similarity">
    <text evidence="1">Belongs to the LpxK family.</text>
</comment>
<organism>
    <name type="scientific">Salmonella choleraesuis (strain SC-B67)</name>
    <dbReference type="NCBI Taxonomy" id="321314"/>
    <lineage>
        <taxon>Bacteria</taxon>
        <taxon>Pseudomonadati</taxon>
        <taxon>Pseudomonadota</taxon>
        <taxon>Gammaproteobacteria</taxon>
        <taxon>Enterobacterales</taxon>
        <taxon>Enterobacteriaceae</taxon>
        <taxon>Salmonella</taxon>
    </lineage>
</organism>
<dbReference type="EC" id="2.7.1.130" evidence="1"/>
<dbReference type="EMBL" id="AE017220">
    <property type="protein sequence ID" value="AAX64848.1"/>
    <property type="molecule type" value="Genomic_DNA"/>
</dbReference>
<dbReference type="RefSeq" id="WP_001539607.1">
    <property type="nucleotide sequence ID" value="NC_006905.1"/>
</dbReference>
<dbReference type="SMR" id="Q57R13"/>
<dbReference type="KEGG" id="sec:SCH_0942"/>
<dbReference type="HOGENOM" id="CLU_038816_2_0_6"/>
<dbReference type="UniPathway" id="UPA00359">
    <property type="reaction ID" value="UER00482"/>
</dbReference>
<dbReference type="Proteomes" id="UP000000538">
    <property type="component" value="Chromosome"/>
</dbReference>
<dbReference type="GO" id="GO:0005886">
    <property type="term" value="C:plasma membrane"/>
    <property type="evidence" value="ECO:0007669"/>
    <property type="project" value="TreeGrafter"/>
</dbReference>
<dbReference type="GO" id="GO:0005524">
    <property type="term" value="F:ATP binding"/>
    <property type="evidence" value="ECO:0007669"/>
    <property type="project" value="UniProtKB-UniRule"/>
</dbReference>
<dbReference type="GO" id="GO:0009029">
    <property type="term" value="F:tetraacyldisaccharide 4'-kinase activity"/>
    <property type="evidence" value="ECO:0007669"/>
    <property type="project" value="UniProtKB-UniRule"/>
</dbReference>
<dbReference type="GO" id="GO:0009245">
    <property type="term" value="P:lipid A biosynthetic process"/>
    <property type="evidence" value="ECO:0007669"/>
    <property type="project" value="UniProtKB-UniRule"/>
</dbReference>
<dbReference type="GO" id="GO:0009244">
    <property type="term" value="P:lipopolysaccharide core region biosynthetic process"/>
    <property type="evidence" value="ECO:0007669"/>
    <property type="project" value="TreeGrafter"/>
</dbReference>
<dbReference type="HAMAP" id="MF_00409">
    <property type="entry name" value="LpxK"/>
    <property type="match status" value="1"/>
</dbReference>
<dbReference type="InterPro" id="IPR003758">
    <property type="entry name" value="LpxK"/>
</dbReference>
<dbReference type="InterPro" id="IPR027417">
    <property type="entry name" value="P-loop_NTPase"/>
</dbReference>
<dbReference type="NCBIfam" id="TIGR00682">
    <property type="entry name" value="lpxK"/>
    <property type="match status" value="1"/>
</dbReference>
<dbReference type="PANTHER" id="PTHR42724">
    <property type="entry name" value="TETRAACYLDISACCHARIDE 4'-KINASE"/>
    <property type="match status" value="1"/>
</dbReference>
<dbReference type="PANTHER" id="PTHR42724:SF1">
    <property type="entry name" value="TETRAACYLDISACCHARIDE 4'-KINASE, MITOCHONDRIAL-RELATED"/>
    <property type="match status" value="1"/>
</dbReference>
<dbReference type="Pfam" id="PF02606">
    <property type="entry name" value="LpxK"/>
    <property type="match status" value="1"/>
</dbReference>
<dbReference type="SUPFAM" id="SSF52540">
    <property type="entry name" value="P-loop containing nucleoside triphosphate hydrolases"/>
    <property type="match status" value="1"/>
</dbReference>
<proteinExistence type="inferred from homology"/>
<gene>
    <name evidence="1" type="primary">lpxK</name>
    <name type="ordered locus">SCH_0942</name>
</gene>
<keyword id="KW-0067">ATP-binding</keyword>
<keyword id="KW-0418">Kinase</keyword>
<keyword id="KW-0441">Lipid A biosynthesis</keyword>
<keyword id="KW-0444">Lipid biosynthesis</keyword>
<keyword id="KW-0443">Lipid metabolism</keyword>
<keyword id="KW-0547">Nucleotide-binding</keyword>
<keyword id="KW-0808">Transferase</keyword>
<name>LPXK_SALCH</name>
<protein>
    <recommendedName>
        <fullName evidence="1">Tetraacyldisaccharide 4'-kinase</fullName>
        <ecNumber evidence="1">2.7.1.130</ecNumber>
    </recommendedName>
    <alternativeName>
        <fullName evidence="1">Lipid A 4'-kinase</fullName>
    </alternativeName>
</protein>
<accession>Q57R13</accession>
<feature type="chain" id="PRO_0000229978" description="Tetraacyldisaccharide 4'-kinase">
    <location>
        <begin position="1"/>
        <end position="325"/>
    </location>
</feature>
<feature type="binding site" evidence="1">
    <location>
        <begin position="55"/>
        <end position="62"/>
    </location>
    <ligand>
        <name>ATP</name>
        <dbReference type="ChEBI" id="CHEBI:30616"/>
    </ligand>
</feature>
<reference key="1">
    <citation type="journal article" date="2005" name="Nucleic Acids Res.">
        <title>The genome sequence of Salmonella enterica serovar Choleraesuis, a highly invasive and resistant zoonotic pathogen.</title>
        <authorList>
            <person name="Chiu C.-H."/>
            <person name="Tang P."/>
            <person name="Chu C."/>
            <person name="Hu S."/>
            <person name="Bao Q."/>
            <person name="Yu J."/>
            <person name="Chou Y.-Y."/>
            <person name="Wang H.-S."/>
            <person name="Lee Y.-S."/>
        </authorList>
    </citation>
    <scope>NUCLEOTIDE SEQUENCE [LARGE SCALE GENOMIC DNA]</scope>
    <source>
        <strain>SC-B67</strain>
    </source>
</reference>